<protein>
    <recommendedName>
        <fullName evidence="1">Type II restriction enzyme AvaI</fullName>
        <shortName>R.AvaI</shortName>
        <ecNumber>3.1.21.4</ecNumber>
    </recommendedName>
    <alternativeName>
        <fullName>Endonuclease AvaI</fullName>
    </alternativeName>
    <alternativeName>
        <fullName>Type-2 restriction enzyme AvaI</fullName>
    </alternativeName>
</protein>
<keyword id="KW-0255">Endonuclease</keyword>
<keyword id="KW-0378">Hydrolase</keyword>
<keyword id="KW-0540">Nuclease</keyword>
<keyword id="KW-1185">Reference proteome</keyword>
<keyword id="KW-0680">Restriction system</keyword>
<evidence type="ECO:0000303" key="1">
    <source>
    </source>
</evidence>
<comment type="function">
    <text evidence="1">A P subtype restriction enzyme that recognizes the double-stranded sequence 5'-CYCGRG-3' and cleaves after C-1.</text>
</comment>
<comment type="catalytic activity">
    <reaction>
        <text>Endonucleolytic cleavage of DNA to give specific double-stranded fragments with terminal 5'-phosphates.</text>
        <dbReference type="EC" id="3.1.21.4"/>
    </reaction>
</comment>
<feature type="chain" id="PRO_0000077279" description="Type II restriction enzyme AvaI">
    <location>
        <begin position="1"/>
        <end position="315"/>
    </location>
</feature>
<name>T2A1_NOSS1</name>
<reference key="1">
    <citation type="journal article" date="2001" name="DNA Res.">
        <title>Complete genomic sequence of the filamentous nitrogen-fixing cyanobacterium Anabaena sp. strain PCC 7120.</title>
        <authorList>
            <person name="Kaneko T."/>
            <person name="Nakamura Y."/>
            <person name="Wolk C.P."/>
            <person name="Kuritz T."/>
            <person name="Sasamoto S."/>
            <person name="Watanabe A."/>
            <person name="Iriguchi M."/>
            <person name="Ishikawa A."/>
            <person name="Kawashima K."/>
            <person name="Kimura T."/>
            <person name="Kishida Y."/>
            <person name="Kohara M."/>
            <person name="Matsumoto M."/>
            <person name="Matsuno A."/>
            <person name="Muraki A."/>
            <person name="Nakazaki N."/>
            <person name="Shimpo S."/>
            <person name="Sugimoto M."/>
            <person name="Takazawa M."/>
            <person name="Yamada M."/>
            <person name="Yasuda M."/>
            <person name="Tabata S."/>
        </authorList>
    </citation>
    <scope>NUCLEOTIDE SEQUENCE [LARGE SCALE GENOMIC DNA]</scope>
    <source>
        <strain>PCC 7120 / SAG 25.82 / UTEX 2576</strain>
    </source>
</reference>
<reference key="2">
    <citation type="journal article" date="2003" name="Nucleic Acids Res.">
        <title>A nomenclature for restriction enzymes, DNA methyltransferases, homing endonucleases and their genes.</title>
        <authorList>
            <person name="Roberts R.J."/>
            <person name="Belfort M."/>
            <person name="Bestor T."/>
            <person name="Bhagwat A.S."/>
            <person name="Bickle T.A."/>
            <person name="Bitinaite J."/>
            <person name="Blumenthal R.M."/>
            <person name="Degtyarev S.K."/>
            <person name="Dryden D.T."/>
            <person name="Dybvig K."/>
            <person name="Firman K."/>
            <person name="Gromova E.S."/>
            <person name="Gumport R.I."/>
            <person name="Halford S.E."/>
            <person name="Hattman S."/>
            <person name="Heitman J."/>
            <person name="Hornby D.P."/>
            <person name="Janulaitis A."/>
            <person name="Jeltsch A."/>
            <person name="Josephsen J."/>
            <person name="Kiss A."/>
            <person name="Klaenhammer T.R."/>
            <person name="Kobayashi I."/>
            <person name="Kong H."/>
            <person name="Krueger D.H."/>
            <person name="Lacks S."/>
            <person name="Marinus M.G."/>
            <person name="Miyahara M."/>
            <person name="Morgan R.D."/>
            <person name="Murray N.E."/>
            <person name="Nagaraja V."/>
            <person name="Piekarowicz A."/>
            <person name="Pingoud A."/>
            <person name="Raleigh E."/>
            <person name="Rao D.N."/>
            <person name="Reich N."/>
            <person name="Repin V.E."/>
            <person name="Selker E.U."/>
            <person name="Shaw P.C."/>
            <person name="Stein D.C."/>
            <person name="Stoddard B.L."/>
            <person name="Szybalski W."/>
            <person name="Trautner T.A."/>
            <person name="Van Etten J.L."/>
            <person name="Vitor J.M."/>
            <person name="Wilson G.G."/>
            <person name="Xu S.Y."/>
        </authorList>
    </citation>
    <scope>NOMENCLATURE</scope>
    <scope>SUBTYPE</scope>
</reference>
<dbReference type="EC" id="3.1.21.4"/>
<dbReference type="EMBL" id="BA000019">
    <property type="protein sequence ID" value="BAB75330.1"/>
    <property type="molecule type" value="Genomic_DNA"/>
</dbReference>
<dbReference type="PIR" id="AH2259">
    <property type="entry name" value="AH2259"/>
</dbReference>
<dbReference type="RefSeq" id="WP_010997776.1">
    <property type="nucleotide sequence ID" value="NZ_RSCN01000070.1"/>
</dbReference>
<dbReference type="SMR" id="P0A457"/>
<dbReference type="STRING" id="103690.gene:10495673"/>
<dbReference type="REBASE" id="165">
    <property type="entry name" value="AvaI"/>
</dbReference>
<dbReference type="KEGG" id="ana:all3631"/>
<dbReference type="eggNOG" id="ENOG502Z94D">
    <property type="taxonomic scope" value="Bacteria"/>
</dbReference>
<dbReference type="OrthoDB" id="1551434at2"/>
<dbReference type="PRO" id="PR:P0A457"/>
<dbReference type="Proteomes" id="UP000002483">
    <property type="component" value="Chromosome"/>
</dbReference>
<dbReference type="GO" id="GO:0003677">
    <property type="term" value="F:DNA binding"/>
    <property type="evidence" value="ECO:0007669"/>
    <property type="project" value="InterPro"/>
</dbReference>
<dbReference type="GO" id="GO:0009036">
    <property type="term" value="F:type II site-specific deoxyribonuclease activity"/>
    <property type="evidence" value="ECO:0007669"/>
    <property type="project" value="UniProtKB-EC"/>
</dbReference>
<dbReference type="GO" id="GO:0009307">
    <property type="term" value="P:DNA restriction-modification system"/>
    <property type="evidence" value="ECO:0007669"/>
    <property type="project" value="UniProtKB-KW"/>
</dbReference>
<dbReference type="CDD" id="cd22315">
    <property type="entry name" value="BsoBI-like"/>
    <property type="match status" value="1"/>
</dbReference>
<dbReference type="Gene3D" id="3.40.91.10">
    <property type="match status" value="1"/>
</dbReference>
<dbReference type="Gene3D" id="1.10.238.90">
    <property type="entry name" value="Restriction endonuclease BsobI, helical domain"/>
    <property type="match status" value="1"/>
</dbReference>
<dbReference type="InterPro" id="IPR043091">
    <property type="entry name" value="Restr_endonucII_AvaI/BsoBI_hel"/>
</dbReference>
<dbReference type="InterPro" id="IPR011335">
    <property type="entry name" value="Restrct_endonuc-II-like"/>
</dbReference>
<dbReference type="InterPro" id="IPR015277">
    <property type="entry name" value="Restrct_endonuc_II_AvaI/BsoBI"/>
</dbReference>
<dbReference type="Pfam" id="PF09194">
    <property type="entry name" value="Endonuc-BsobI"/>
    <property type="match status" value="1"/>
</dbReference>
<dbReference type="SUPFAM" id="SSF52980">
    <property type="entry name" value="Restriction endonuclease-like"/>
    <property type="match status" value="1"/>
</dbReference>
<proteinExistence type="predicted"/>
<accession>P0A457</accession>
<accession>P70803</accession>
<gene>
    <name type="primary">avaIR</name>
    <name type="ordered locus">all3631</name>
</gene>
<organism>
    <name type="scientific">Nostoc sp. (strain PCC 7120 / SAG 25.82 / UTEX 2576)</name>
    <dbReference type="NCBI Taxonomy" id="103690"/>
    <lineage>
        <taxon>Bacteria</taxon>
        <taxon>Bacillati</taxon>
        <taxon>Cyanobacteriota</taxon>
        <taxon>Cyanophyceae</taxon>
        <taxon>Nostocales</taxon>
        <taxon>Nostocaceae</taxon>
        <taxon>Nostoc</taxon>
    </lineage>
</organism>
<sequence length="315" mass="35679">MPYQYHIQSNDDLVTPYQEVRAGFVALALERNRKATPFVEQARALKIRVSQIERPQDLLQMRDIRPTLLAASGVSDKAAGHLQEQDKVDAIEGLIQNFLEPAGENFVEELVYRFLLTRGDTLGGSMRNVGGILAERKFARYIISALTLSNTSYKWLDKNSKTWLNQPDDDTDIELRLRGLSWNLEGRNRTFIYNVNVPIVRKNIDICLFDCRQNEIEKNIISNPNIYIALGELKGGIDPAGADEHWKTANSALARIRTAFDRHSLKPYTFFVGSAIEKSMAEEIWHQLNSGILTNAANLTQPDQVASLCAWFIQL</sequence>